<gene>
    <name evidence="1" type="primary">accA</name>
    <name type="ordered locus">BMA10229_A3158</name>
</gene>
<comment type="function">
    <text evidence="1">Component of the acetyl coenzyme A carboxylase (ACC) complex. First, biotin carboxylase catalyzes the carboxylation of biotin on its carrier protein (BCCP) and then the CO(2) group is transferred by the carboxyltransferase to acetyl-CoA to form malonyl-CoA.</text>
</comment>
<comment type="catalytic activity">
    <reaction evidence="1">
        <text>N(6)-carboxybiotinyl-L-lysyl-[protein] + acetyl-CoA = N(6)-biotinyl-L-lysyl-[protein] + malonyl-CoA</text>
        <dbReference type="Rhea" id="RHEA:54728"/>
        <dbReference type="Rhea" id="RHEA-COMP:10505"/>
        <dbReference type="Rhea" id="RHEA-COMP:10506"/>
        <dbReference type="ChEBI" id="CHEBI:57288"/>
        <dbReference type="ChEBI" id="CHEBI:57384"/>
        <dbReference type="ChEBI" id="CHEBI:83144"/>
        <dbReference type="ChEBI" id="CHEBI:83145"/>
        <dbReference type="EC" id="2.1.3.15"/>
    </reaction>
</comment>
<comment type="pathway">
    <text evidence="1">Lipid metabolism; malonyl-CoA biosynthesis; malonyl-CoA from acetyl-CoA: step 1/1.</text>
</comment>
<comment type="subunit">
    <text evidence="1">Acetyl-CoA carboxylase is a heterohexamer composed of biotin carboxyl carrier protein (AccB), biotin carboxylase (AccC) and two subunits each of ACCase subunit alpha (AccA) and ACCase subunit beta (AccD).</text>
</comment>
<comment type="subcellular location">
    <subcellularLocation>
        <location evidence="1">Cytoplasm</location>
    </subcellularLocation>
</comment>
<comment type="similarity">
    <text evidence="1">Belongs to the AccA family.</text>
</comment>
<keyword id="KW-0067">ATP-binding</keyword>
<keyword id="KW-0963">Cytoplasm</keyword>
<keyword id="KW-0275">Fatty acid biosynthesis</keyword>
<keyword id="KW-0276">Fatty acid metabolism</keyword>
<keyword id="KW-0444">Lipid biosynthesis</keyword>
<keyword id="KW-0443">Lipid metabolism</keyword>
<keyword id="KW-0547">Nucleotide-binding</keyword>
<keyword id="KW-0808">Transferase</keyword>
<evidence type="ECO:0000255" key="1">
    <source>
        <dbReference type="HAMAP-Rule" id="MF_00823"/>
    </source>
</evidence>
<evidence type="ECO:0000255" key="2">
    <source>
        <dbReference type="PROSITE-ProRule" id="PRU01137"/>
    </source>
</evidence>
<name>ACCA_BURM9</name>
<organism>
    <name type="scientific">Burkholderia mallei (strain NCTC 10229)</name>
    <dbReference type="NCBI Taxonomy" id="412022"/>
    <lineage>
        <taxon>Bacteria</taxon>
        <taxon>Pseudomonadati</taxon>
        <taxon>Pseudomonadota</taxon>
        <taxon>Betaproteobacteria</taxon>
        <taxon>Burkholderiales</taxon>
        <taxon>Burkholderiaceae</taxon>
        <taxon>Burkholderia</taxon>
        <taxon>pseudomallei group</taxon>
    </lineage>
</organism>
<protein>
    <recommendedName>
        <fullName evidence="1">Acetyl-coenzyme A carboxylase carboxyl transferase subunit alpha</fullName>
        <shortName evidence="1">ACCase subunit alpha</shortName>
        <shortName evidence="1">Acetyl-CoA carboxylase carboxyltransferase subunit alpha</shortName>
        <ecNumber evidence="1">2.1.3.15</ecNumber>
    </recommendedName>
</protein>
<sequence>MKTTFLDFEQPIAELEAKIEELRFVQDDSAVDISEEIERLSKKSQQLTKDLYANLTPWQVSQIARHPQRPYTLDYVSELFTDFHELHGDRAFADDQSIVGGLARFNGHACMVIGHQKGRDTKERAARNFGMPRPEGYRKAERLMRVAEKFGLPIFTFVDTPGAYPGVGAEERGQSEAIGHNLYVMAELKTPIIATVIGEGGSGGALAIAVADTVMMLQFSTYSVISPEGCASILWKSAAKAPEAAEALGLTAHRLKALGLIDKIVNEPLGGAHRDPKGMAALLRRALGDSLRQFQGMSVDALRERRFERLMAYGKFKETTPRA</sequence>
<proteinExistence type="inferred from homology"/>
<reference key="1">
    <citation type="journal article" date="2010" name="Genome Biol. Evol.">
        <title>Continuing evolution of Burkholderia mallei through genome reduction and large-scale rearrangements.</title>
        <authorList>
            <person name="Losada L."/>
            <person name="Ronning C.M."/>
            <person name="DeShazer D."/>
            <person name="Woods D."/>
            <person name="Fedorova N."/>
            <person name="Kim H.S."/>
            <person name="Shabalina S.A."/>
            <person name="Pearson T.R."/>
            <person name="Brinkac L."/>
            <person name="Tan P."/>
            <person name="Nandi T."/>
            <person name="Crabtree J."/>
            <person name="Badger J."/>
            <person name="Beckstrom-Sternberg S."/>
            <person name="Saqib M."/>
            <person name="Schutzer S.E."/>
            <person name="Keim P."/>
            <person name="Nierman W.C."/>
        </authorList>
    </citation>
    <scope>NUCLEOTIDE SEQUENCE [LARGE SCALE GENOMIC DNA]</scope>
    <source>
        <strain>NCTC 10229</strain>
    </source>
</reference>
<dbReference type="EC" id="2.1.3.15" evidence="1"/>
<dbReference type="EMBL" id="CP000546">
    <property type="protein sequence ID" value="ABN02065.1"/>
    <property type="molecule type" value="Genomic_DNA"/>
</dbReference>
<dbReference type="RefSeq" id="WP_004193249.1">
    <property type="nucleotide sequence ID" value="NC_008836.1"/>
</dbReference>
<dbReference type="SMR" id="A2SAY0"/>
<dbReference type="KEGG" id="bml:BMA10229_A3158"/>
<dbReference type="HOGENOM" id="CLU_015486_0_2_4"/>
<dbReference type="UniPathway" id="UPA00655">
    <property type="reaction ID" value="UER00711"/>
</dbReference>
<dbReference type="Proteomes" id="UP000002283">
    <property type="component" value="Chromosome I"/>
</dbReference>
<dbReference type="GO" id="GO:0009317">
    <property type="term" value="C:acetyl-CoA carboxylase complex"/>
    <property type="evidence" value="ECO:0007669"/>
    <property type="project" value="InterPro"/>
</dbReference>
<dbReference type="GO" id="GO:0003989">
    <property type="term" value="F:acetyl-CoA carboxylase activity"/>
    <property type="evidence" value="ECO:0007669"/>
    <property type="project" value="InterPro"/>
</dbReference>
<dbReference type="GO" id="GO:0005524">
    <property type="term" value="F:ATP binding"/>
    <property type="evidence" value="ECO:0007669"/>
    <property type="project" value="UniProtKB-KW"/>
</dbReference>
<dbReference type="GO" id="GO:0016743">
    <property type="term" value="F:carboxyl- or carbamoyltransferase activity"/>
    <property type="evidence" value="ECO:0007669"/>
    <property type="project" value="UniProtKB-UniRule"/>
</dbReference>
<dbReference type="GO" id="GO:0006633">
    <property type="term" value="P:fatty acid biosynthetic process"/>
    <property type="evidence" value="ECO:0007669"/>
    <property type="project" value="UniProtKB-KW"/>
</dbReference>
<dbReference type="GO" id="GO:2001295">
    <property type="term" value="P:malonyl-CoA biosynthetic process"/>
    <property type="evidence" value="ECO:0007669"/>
    <property type="project" value="UniProtKB-UniRule"/>
</dbReference>
<dbReference type="Gene3D" id="3.90.226.10">
    <property type="entry name" value="2-enoyl-CoA Hydratase, Chain A, domain 1"/>
    <property type="match status" value="1"/>
</dbReference>
<dbReference type="HAMAP" id="MF_00823">
    <property type="entry name" value="AcetylCoA_CT_alpha"/>
    <property type="match status" value="1"/>
</dbReference>
<dbReference type="InterPro" id="IPR001095">
    <property type="entry name" value="Acetyl_CoA_COase_a_su"/>
</dbReference>
<dbReference type="InterPro" id="IPR029045">
    <property type="entry name" value="ClpP/crotonase-like_dom_sf"/>
</dbReference>
<dbReference type="InterPro" id="IPR011763">
    <property type="entry name" value="COA_CT_C"/>
</dbReference>
<dbReference type="NCBIfam" id="TIGR00513">
    <property type="entry name" value="accA"/>
    <property type="match status" value="1"/>
</dbReference>
<dbReference type="NCBIfam" id="NF041504">
    <property type="entry name" value="AccA_sub"/>
    <property type="match status" value="1"/>
</dbReference>
<dbReference type="NCBIfam" id="NF004344">
    <property type="entry name" value="PRK05724.1"/>
    <property type="match status" value="1"/>
</dbReference>
<dbReference type="PANTHER" id="PTHR42853">
    <property type="entry name" value="ACETYL-COENZYME A CARBOXYLASE CARBOXYL TRANSFERASE SUBUNIT ALPHA"/>
    <property type="match status" value="1"/>
</dbReference>
<dbReference type="PANTHER" id="PTHR42853:SF3">
    <property type="entry name" value="ACETYL-COENZYME A CARBOXYLASE CARBOXYL TRANSFERASE SUBUNIT ALPHA, CHLOROPLASTIC"/>
    <property type="match status" value="1"/>
</dbReference>
<dbReference type="Pfam" id="PF03255">
    <property type="entry name" value="ACCA"/>
    <property type="match status" value="1"/>
</dbReference>
<dbReference type="PRINTS" id="PR01069">
    <property type="entry name" value="ACCCTRFRASEA"/>
</dbReference>
<dbReference type="SUPFAM" id="SSF52096">
    <property type="entry name" value="ClpP/crotonase"/>
    <property type="match status" value="1"/>
</dbReference>
<dbReference type="PROSITE" id="PS50989">
    <property type="entry name" value="COA_CT_CTER"/>
    <property type="match status" value="1"/>
</dbReference>
<feature type="chain" id="PRO_1000062589" description="Acetyl-coenzyme A carboxylase carboxyl transferase subunit alpha">
    <location>
        <begin position="1"/>
        <end position="323"/>
    </location>
</feature>
<feature type="domain" description="CoA carboxyltransferase C-terminal" evidence="2">
    <location>
        <begin position="39"/>
        <end position="293"/>
    </location>
</feature>
<accession>A2SAY0</accession>